<accession>Q2YRD1</accession>
<organism>
    <name type="scientific">Brucella abortus (strain 2308)</name>
    <dbReference type="NCBI Taxonomy" id="359391"/>
    <lineage>
        <taxon>Bacteria</taxon>
        <taxon>Pseudomonadati</taxon>
        <taxon>Pseudomonadota</taxon>
        <taxon>Alphaproteobacteria</taxon>
        <taxon>Hyphomicrobiales</taxon>
        <taxon>Brucellaceae</taxon>
        <taxon>Brucella/Ochrobactrum group</taxon>
        <taxon>Brucella</taxon>
    </lineage>
</organism>
<proteinExistence type="inferred from homology"/>
<protein>
    <recommendedName>
        <fullName evidence="1">Holliday junction branch migration complex subunit RuvA</fullName>
    </recommendedName>
</protein>
<evidence type="ECO:0000255" key="1">
    <source>
        <dbReference type="HAMAP-Rule" id="MF_00031"/>
    </source>
</evidence>
<dbReference type="EMBL" id="AM040264">
    <property type="protein sequence ID" value="CAJ11671.1"/>
    <property type="molecule type" value="Genomic_DNA"/>
</dbReference>
<dbReference type="RefSeq" id="WP_002964792.1">
    <property type="nucleotide sequence ID" value="NZ_KN046823.1"/>
</dbReference>
<dbReference type="SMR" id="Q2YRD1"/>
<dbReference type="STRING" id="359391.BAB1_1715"/>
<dbReference type="GeneID" id="97533143"/>
<dbReference type="KEGG" id="bmf:BAB1_1715"/>
<dbReference type="PATRIC" id="fig|359391.11.peg.229"/>
<dbReference type="HOGENOM" id="CLU_087936_3_0_5"/>
<dbReference type="PhylomeDB" id="Q2YRD1"/>
<dbReference type="Proteomes" id="UP000002719">
    <property type="component" value="Chromosome I"/>
</dbReference>
<dbReference type="GO" id="GO:0005737">
    <property type="term" value="C:cytoplasm"/>
    <property type="evidence" value="ECO:0007669"/>
    <property type="project" value="UniProtKB-SubCell"/>
</dbReference>
<dbReference type="GO" id="GO:0009379">
    <property type="term" value="C:Holliday junction helicase complex"/>
    <property type="evidence" value="ECO:0007669"/>
    <property type="project" value="InterPro"/>
</dbReference>
<dbReference type="GO" id="GO:0048476">
    <property type="term" value="C:Holliday junction resolvase complex"/>
    <property type="evidence" value="ECO:0007669"/>
    <property type="project" value="UniProtKB-UniRule"/>
</dbReference>
<dbReference type="GO" id="GO:0005524">
    <property type="term" value="F:ATP binding"/>
    <property type="evidence" value="ECO:0007669"/>
    <property type="project" value="InterPro"/>
</dbReference>
<dbReference type="GO" id="GO:0000400">
    <property type="term" value="F:four-way junction DNA binding"/>
    <property type="evidence" value="ECO:0007669"/>
    <property type="project" value="UniProtKB-UniRule"/>
</dbReference>
<dbReference type="GO" id="GO:0009378">
    <property type="term" value="F:four-way junction helicase activity"/>
    <property type="evidence" value="ECO:0007669"/>
    <property type="project" value="InterPro"/>
</dbReference>
<dbReference type="GO" id="GO:0006310">
    <property type="term" value="P:DNA recombination"/>
    <property type="evidence" value="ECO:0007669"/>
    <property type="project" value="UniProtKB-UniRule"/>
</dbReference>
<dbReference type="GO" id="GO:0006281">
    <property type="term" value="P:DNA repair"/>
    <property type="evidence" value="ECO:0007669"/>
    <property type="project" value="UniProtKB-UniRule"/>
</dbReference>
<dbReference type="Gene3D" id="1.10.150.20">
    <property type="entry name" value="5' to 3' exonuclease, C-terminal subdomain"/>
    <property type="match status" value="1"/>
</dbReference>
<dbReference type="Gene3D" id="1.10.8.10">
    <property type="entry name" value="DNA helicase RuvA subunit, C-terminal domain"/>
    <property type="match status" value="1"/>
</dbReference>
<dbReference type="Gene3D" id="2.40.50.140">
    <property type="entry name" value="Nucleic acid-binding proteins"/>
    <property type="match status" value="1"/>
</dbReference>
<dbReference type="HAMAP" id="MF_00031">
    <property type="entry name" value="DNA_HJ_migration_RuvA"/>
    <property type="match status" value="1"/>
</dbReference>
<dbReference type="InterPro" id="IPR013849">
    <property type="entry name" value="DNA_helicase_Holl-junc_RuvA_I"/>
</dbReference>
<dbReference type="InterPro" id="IPR003583">
    <property type="entry name" value="Hlx-hairpin-Hlx_DNA-bd_motif"/>
</dbReference>
<dbReference type="InterPro" id="IPR012340">
    <property type="entry name" value="NA-bd_OB-fold"/>
</dbReference>
<dbReference type="InterPro" id="IPR000085">
    <property type="entry name" value="RuvA"/>
</dbReference>
<dbReference type="InterPro" id="IPR010994">
    <property type="entry name" value="RuvA_2-like"/>
</dbReference>
<dbReference type="InterPro" id="IPR011114">
    <property type="entry name" value="RuvA_C"/>
</dbReference>
<dbReference type="InterPro" id="IPR036267">
    <property type="entry name" value="RuvA_C_sf"/>
</dbReference>
<dbReference type="NCBIfam" id="TIGR00084">
    <property type="entry name" value="ruvA"/>
    <property type="match status" value="1"/>
</dbReference>
<dbReference type="Pfam" id="PF14520">
    <property type="entry name" value="HHH_5"/>
    <property type="match status" value="1"/>
</dbReference>
<dbReference type="Pfam" id="PF07499">
    <property type="entry name" value="RuvA_C"/>
    <property type="match status" value="1"/>
</dbReference>
<dbReference type="Pfam" id="PF01330">
    <property type="entry name" value="RuvA_N"/>
    <property type="match status" value="1"/>
</dbReference>
<dbReference type="SMART" id="SM00278">
    <property type="entry name" value="HhH1"/>
    <property type="match status" value="2"/>
</dbReference>
<dbReference type="SUPFAM" id="SSF46929">
    <property type="entry name" value="DNA helicase RuvA subunit, C-terminal domain"/>
    <property type="match status" value="1"/>
</dbReference>
<dbReference type="SUPFAM" id="SSF50249">
    <property type="entry name" value="Nucleic acid-binding proteins"/>
    <property type="match status" value="1"/>
</dbReference>
<dbReference type="SUPFAM" id="SSF47781">
    <property type="entry name" value="RuvA domain 2-like"/>
    <property type="match status" value="1"/>
</dbReference>
<sequence>MIGKLKGVIDEIAEDHAVIDVHGVGYVAFCSARTLGNLGGAGEAAILFIETYVREDMIRLYGFATQLEREWFRLLQNVQGVGAKVALAVLGTLSPSELANAIALRDIAMVSRAPGVGKKVAERIVTELKNKAPAFAGEASGTIGLKQELGAGAAPAPVADAVSALSNLGYSRDQAANAVAAALKETGEGADSAKLIRLGLKELSQ</sequence>
<gene>
    <name evidence="1" type="primary">ruvA</name>
    <name type="ordered locus">BAB1_1715</name>
</gene>
<name>RUVA_BRUA2</name>
<feature type="chain" id="PRO_1000002406" description="Holliday junction branch migration complex subunit RuvA">
    <location>
        <begin position="1"/>
        <end position="205"/>
    </location>
</feature>
<feature type="region of interest" description="Domain I" evidence="1">
    <location>
        <begin position="1"/>
        <end position="64"/>
    </location>
</feature>
<feature type="region of interest" description="Domain II" evidence="1">
    <location>
        <begin position="65"/>
        <end position="143"/>
    </location>
</feature>
<feature type="region of interest" description="Flexible linker" evidence="1">
    <location>
        <begin position="144"/>
        <end position="152"/>
    </location>
</feature>
<feature type="region of interest" description="Domain III" evidence="1">
    <location>
        <begin position="153"/>
        <end position="205"/>
    </location>
</feature>
<reference key="1">
    <citation type="journal article" date="2005" name="Infect. Immun.">
        <title>Whole-genome analyses of speciation events in pathogenic Brucellae.</title>
        <authorList>
            <person name="Chain P.S."/>
            <person name="Comerci D.J."/>
            <person name="Tolmasky M.E."/>
            <person name="Larimer F.W."/>
            <person name="Malfatti S.A."/>
            <person name="Vergez L.M."/>
            <person name="Aguero F."/>
            <person name="Land M.L."/>
            <person name="Ugalde R.A."/>
            <person name="Garcia E."/>
        </authorList>
    </citation>
    <scope>NUCLEOTIDE SEQUENCE [LARGE SCALE GENOMIC DNA]</scope>
    <source>
        <strain>2308</strain>
    </source>
</reference>
<keyword id="KW-0963">Cytoplasm</keyword>
<keyword id="KW-0227">DNA damage</keyword>
<keyword id="KW-0233">DNA recombination</keyword>
<keyword id="KW-0234">DNA repair</keyword>
<keyword id="KW-0238">DNA-binding</keyword>
<keyword id="KW-1185">Reference proteome</keyword>
<comment type="function">
    <text evidence="1">The RuvA-RuvB-RuvC complex processes Holliday junction (HJ) DNA during genetic recombination and DNA repair, while the RuvA-RuvB complex plays an important role in the rescue of blocked DNA replication forks via replication fork reversal (RFR). RuvA specifically binds to HJ cruciform DNA, conferring on it an open structure. The RuvB hexamer acts as an ATP-dependent pump, pulling dsDNA into and through the RuvAB complex. HJ branch migration allows RuvC to scan DNA until it finds its consensus sequence, where it cleaves and resolves the cruciform DNA.</text>
</comment>
<comment type="subunit">
    <text evidence="1">Homotetramer. Forms an RuvA(8)-RuvB(12)-Holliday junction (HJ) complex. HJ DNA is sandwiched between 2 RuvA tetramers; dsDNA enters through RuvA and exits via RuvB. An RuvB hexamer assembles on each DNA strand where it exits the tetramer. Each RuvB hexamer is contacted by two RuvA subunits (via domain III) on 2 adjacent RuvB subunits; this complex drives branch migration. In the full resolvosome a probable DNA-RuvA(4)-RuvB(12)-RuvC(2) complex forms which resolves the HJ.</text>
</comment>
<comment type="subcellular location">
    <subcellularLocation>
        <location evidence="1">Cytoplasm</location>
    </subcellularLocation>
</comment>
<comment type="domain">
    <text evidence="1">Has three domains with a flexible linker between the domains II and III and assumes an 'L' shape. Domain III is highly mobile and contacts RuvB.</text>
</comment>
<comment type="similarity">
    <text evidence="1">Belongs to the RuvA family.</text>
</comment>